<dbReference type="EC" id="6.3.4.20" evidence="1"/>
<dbReference type="EMBL" id="CP000653">
    <property type="protein sequence ID" value="ABP59595.1"/>
    <property type="status" value="ALT_INIT"/>
    <property type="molecule type" value="Genomic_DNA"/>
</dbReference>
<dbReference type="RefSeq" id="WP_041689305.1">
    <property type="nucleotide sequence ID" value="NC_009436.1"/>
</dbReference>
<dbReference type="SMR" id="A4W7B5"/>
<dbReference type="STRING" id="399742.Ent638_0911"/>
<dbReference type="KEGG" id="ent:Ent638_0911"/>
<dbReference type="eggNOG" id="COG0603">
    <property type="taxonomic scope" value="Bacteria"/>
</dbReference>
<dbReference type="HOGENOM" id="CLU_081854_0_0_6"/>
<dbReference type="OrthoDB" id="9789567at2"/>
<dbReference type="UniPathway" id="UPA00391"/>
<dbReference type="Proteomes" id="UP000000230">
    <property type="component" value="Chromosome"/>
</dbReference>
<dbReference type="GO" id="GO:0005524">
    <property type="term" value="F:ATP binding"/>
    <property type="evidence" value="ECO:0007669"/>
    <property type="project" value="UniProtKB-UniRule"/>
</dbReference>
<dbReference type="GO" id="GO:0016879">
    <property type="term" value="F:ligase activity, forming carbon-nitrogen bonds"/>
    <property type="evidence" value="ECO:0007669"/>
    <property type="project" value="UniProtKB-UniRule"/>
</dbReference>
<dbReference type="GO" id="GO:0008270">
    <property type="term" value="F:zinc ion binding"/>
    <property type="evidence" value="ECO:0007669"/>
    <property type="project" value="UniProtKB-UniRule"/>
</dbReference>
<dbReference type="GO" id="GO:0008616">
    <property type="term" value="P:queuosine biosynthetic process"/>
    <property type="evidence" value="ECO:0007669"/>
    <property type="project" value="UniProtKB-UniRule"/>
</dbReference>
<dbReference type="CDD" id="cd01995">
    <property type="entry name" value="QueC-like"/>
    <property type="match status" value="1"/>
</dbReference>
<dbReference type="FunFam" id="3.40.50.620:FF:000017">
    <property type="entry name" value="7-cyano-7-deazaguanine synthase"/>
    <property type="match status" value="1"/>
</dbReference>
<dbReference type="Gene3D" id="3.40.50.620">
    <property type="entry name" value="HUPs"/>
    <property type="match status" value="1"/>
</dbReference>
<dbReference type="HAMAP" id="MF_01633">
    <property type="entry name" value="QueC"/>
    <property type="match status" value="1"/>
</dbReference>
<dbReference type="InterPro" id="IPR018317">
    <property type="entry name" value="QueC"/>
</dbReference>
<dbReference type="InterPro" id="IPR014729">
    <property type="entry name" value="Rossmann-like_a/b/a_fold"/>
</dbReference>
<dbReference type="NCBIfam" id="TIGR00364">
    <property type="entry name" value="7-cyano-7-deazaguanine synthase QueC"/>
    <property type="match status" value="1"/>
</dbReference>
<dbReference type="NCBIfam" id="NF008317">
    <property type="entry name" value="PRK11106.1"/>
    <property type="match status" value="1"/>
</dbReference>
<dbReference type="PANTHER" id="PTHR42914">
    <property type="entry name" value="7-CYANO-7-DEAZAGUANINE SYNTHASE"/>
    <property type="match status" value="1"/>
</dbReference>
<dbReference type="PANTHER" id="PTHR42914:SF1">
    <property type="entry name" value="7-CYANO-7-DEAZAGUANINE SYNTHASE"/>
    <property type="match status" value="1"/>
</dbReference>
<dbReference type="Pfam" id="PF06508">
    <property type="entry name" value="QueC"/>
    <property type="match status" value="1"/>
</dbReference>
<dbReference type="PIRSF" id="PIRSF006293">
    <property type="entry name" value="ExsB"/>
    <property type="match status" value="1"/>
</dbReference>
<dbReference type="SUPFAM" id="SSF52402">
    <property type="entry name" value="Adenine nucleotide alpha hydrolases-like"/>
    <property type="match status" value="1"/>
</dbReference>
<comment type="function">
    <text evidence="1">Catalyzes the ATP-dependent conversion of 7-carboxy-7-deazaguanine (CDG) to 7-cyano-7-deazaguanine (preQ(0)).</text>
</comment>
<comment type="catalytic activity">
    <reaction evidence="1">
        <text>7-carboxy-7-deazaguanine + NH4(+) + ATP = 7-cyano-7-deazaguanine + ADP + phosphate + H2O + H(+)</text>
        <dbReference type="Rhea" id="RHEA:27982"/>
        <dbReference type="ChEBI" id="CHEBI:15377"/>
        <dbReference type="ChEBI" id="CHEBI:15378"/>
        <dbReference type="ChEBI" id="CHEBI:28938"/>
        <dbReference type="ChEBI" id="CHEBI:30616"/>
        <dbReference type="ChEBI" id="CHEBI:43474"/>
        <dbReference type="ChEBI" id="CHEBI:45075"/>
        <dbReference type="ChEBI" id="CHEBI:61036"/>
        <dbReference type="ChEBI" id="CHEBI:456216"/>
        <dbReference type="EC" id="6.3.4.20"/>
    </reaction>
</comment>
<comment type="cofactor">
    <cofactor evidence="1">
        <name>Zn(2+)</name>
        <dbReference type="ChEBI" id="CHEBI:29105"/>
    </cofactor>
    <text evidence="1">Binds 1 zinc ion per subunit.</text>
</comment>
<comment type="pathway">
    <text evidence="1">Purine metabolism; 7-cyano-7-deazaguanine biosynthesis.</text>
</comment>
<comment type="similarity">
    <text evidence="1">Belongs to the QueC family.</text>
</comment>
<comment type="sequence caution" evidence="2">
    <conflict type="erroneous initiation">
        <sequence resource="EMBL-CDS" id="ABP59595"/>
    </conflict>
</comment>
<gene>
    <name evidence="1" type="primary">queC</name>
    <name type="ordered locus">Ent638_0911</name>
</gene>
<accession>A4W7B5</accession>
<reference key="1">
    <citation type="journal article" date="2010" name="PLoS Genet.">
        <title>Genome sequence of the plant growth promoting endophytic bacterium Enterobacter sp. 638.</title>
        <authorList>
            <person name="Taghavi S."/>
            <person name="van der Lelie D."/>
            <person name="Hoffman A."/>
            <person name="Zhang Y.B."/>
            <person name="Walla M.D."/>
            <person name="Vangronsveld J."/>
            <person name="Newman L."/>
            <person name="Monchy S."/>
        </authorList>
    </citation>
    <scope>NUCLEOTIDE SEQUENCE [LARGE SCALE GENOMIC DNA]</scope>
    <source>
        <strain>638</strain>
    </source>
</reference>
<evidence type="ECO:0000255" key="1">
    <source>
        <dbReference type="HAMAP-Rule" id="MF_01633"/>
    </source>
</evidence>
<evidence type="ECO:0000305" key="2"/>
<sequence>MKRAVVVFSGGQDSTTCLIQALHQYDEVHCVTFDYGQRHRAEIDVARELALKLGARAHKVLDVTLLNELAVSSLTRDSIPVPDYEPDADGIPNTFVPGRNILFLTLTAIYAYQVKAEAIITGVCETDFSGYPDCRDEFVKALNHAVDLGMAKEIRFETPLMWLDKAETWALADYWEKLELVRTETLTCYNGIKGDGCGQCAACNLRSNGLNHYLANKPAVMSAMKAKTGLK</sequence>
<name>QUEC_ENT38</name>
<feature type="chain" id="PRO_0000336911" description="7-cyano-7-deazaguanine synthase">
    <location>
        <begin position="1"/>
        <end position="231"/>
    </location>
</feature>
<feature type="binding site" evidence="1">
    <location>
        <begin position="8"/>
        <end position="18"/>
    </location>
    <ligand>
        <name>ATP</name>
        <dbReference type="ChEBI" id="CHEBI:30616"/>
    </ligand>
</feature>
<feature type="binding site" evidence="1">
    <location>
        <position position="188"/>
    </location>
    <ligand>
        <name>Zn(2+)</name>
        <dbReference type="ChEBI" id="CHEBI:29105"/>
    </ligand>
</feature>
<feature type="binding site" evidence="1">
    <location>
        <position position="197"/>
    </location>
    <ligand>
        <name>Zn(2+)</name>
        <dbReference type="ChEBI" id="CHEBI:29105"/>
    </ligand>
</feature>
<feature type="binding site" evidence="1">
    <location>
        <position position="200"/>
    </location>
    <ligand>
        <name>Zn(2+)</name>
        <dbReference type="ChEBI" id="CHEBI:29105"/>
    </ligand>
</feature>
<feature type="binding site" evidence="1">
    <location>
        <position position="203"/>
    </location>
    <ligand>
        <name>Zn(2+)</name>
        <dbReference type="ChEBI" id="CHEBI:29105"/>
    </ligand>
</feature>
<protein>
    <recommendedName>
        <fullName evidence="1">7-cyano-7-deazaguanine synthase</fullName>
        <ecNumber evidence="1">6.3.4.20</ecNumber>
    </recommendedName>
    <alternativeName>
        <fullName evidence="1">7-cyano-7-carbaguanine synthase</fullName>
    </alternativeName>
    <alternativeName>
        <fullName evidence="1">PreQ(0) synthase</fullName>
    </alternativeName>
    <alternativeName>
        <fullName evidence="1">Queuosine biosynthesis protein QueC</fullName>
    </alternativeName>
</protein>
<keyword id="KW-0067">ATP-binding</keyword>
<keyword id="KW-0436">Ligase</keyword>
<keyword id="KW-0479">Metal-binding</keyword>
<keyword id="KW-0547">Nucleotide-binding</keyword>
<keyword id="KW-0671">Queuosine biosynthesis</keyword>
<keyword id="KW-0862">Zinc</keyword>
<organism>
    <name type="scientific">Enterobacter sp. (strain 638)</name>
    <dbReference type="NCBI Taxonomy" id="399742"/>
    <lineage>
        <taxon>Bacteria</taxon>
        <taxon>Pseudomonadati</taxon>
        <taxon>Pseudomonadota</taxon>
        <taxon>Gammaproteobacteria</taxon>
        <taxon>Enterobacterales</taxon>
        <taxon>Enterobacteriaceae</taxon>
        <taxon>Enterobacter</taxon>
    </lineage>
</organism>
<proteinExistence type="inferred from homology"/>